<comment type="function">
    <text evidence="1">Required for maturation of 30S ribosomal subunits.</text>
</comment>
<comment type="subcellular location">
    <subcellularLocation>
        <location evidence="1">Cytoplasm</location>
    </subcellularLocation>
</comment>
<comment type="similarity">
    <text evidence="1">Belongs to the RimP family.</text>
</comment>
<evidence type="ECO:0000255" key="1">
    <source>
        <dbReference type="HAMAP-Rule" id="MF_01077"/>
    </source>
</evidence>
<reference key="1">
    <citation type="submission" date="2005-10" db="EMBL/GenBank/DDBJ databases">
        <title>Complete sequence of chromosome 1 of Burkholderia sp. 383.</title>
        <authorList>
            <consortium name="US DOE Joint Genome Institute"/>
            <person name="Copeland A."/>
            <person name="Lucas S."/>
            <person name="Lapidus A."/>
            <person name="Barry K."/>
            <person name="Detter J.C."/>
            <person name="Glavina T."/>
            <person name="Hammon N."/>
            <person name="Israni S."/>
            <person name="Pitluck S."/>
            <person name="Chain P."/>
            <person name="Malfatti S."/>
            <person name="Shin M."/>
            <person name="Vergez L."/>
            <person name="Schmutz J."/>
            <person name="Larimer F."/>
            <person name="Land M."/>
            <person name="Kyrpides N."/>
            <person name="Lykidis A."/>
            <person name="Richardson P."/>
        </authorList>
    </citation>
    <scope>NUCLEOTIDE SEQUENCE [LARGE SCALE GENOMIC DNA]</scope>
    <source>
        <strain>ATCC 17760 / DSM 23089 / LMG 22485 / NCIMB 9086 / R18194 / 383</strain>
    </source>
</reference>
<protein>
    <recommendedName>
        <fullName evidence="1">Ribosome maturation factor RimP</fullName>
    </recommendedName>
</protein>
<accession>Q39H32</accession>
<organism>
    <name type="scientific">Burkholderia lata (strain ATCC 17760 / DSM 23089 / LMG 22485 / NCIMB 9086 / R18194 / 383)</name>
    <dbReference type="NCBI Taxonomy" id="482957"/>
    <lineage>
        <taxon>Bacteria</taxon>
        <taxon>Pseudomonadati</taxon>
        <taxon>Pseudomonadota</taxon>
        <taxon>Betaproteobacteria</taxon>
        <taxon>Burkholderiales</taxon>
        <taxon>Burkholderiaceae</taxon>
        <taxon>Burkholderia</taxon>
        <taxon>Burkholderia cepacia complex</taxon>
    </lineage>
</organism>
<name>RIMP_BURL3</name>
<gene>
    <name evidence="1" type="primary">rimP</name>
    <name type="ordered locus">Bcep18194_A4639</name>
</gene>
<keyword id="KW-0963">Cytoplasm</keyword>
<keyword id="KW-0690">Ribosome biogenesis</keyword>
<proteinExistence type="inferred from homology"/>
<dbReference type="EMBL" id="CP000151">
    <property type="protein sequence ID" value="ABB08234.1"/>
    <property type="molecule type" value="Genomic_DNA"/>
</dbReference>
<dbReference type="RefSeq" id="WP_011351796.1">
    <property type="nucleotide sequence ID" value="NZ_WNDV01000056.1"/>
</dbReference>
<dbReference type="SMR" id="Q39H32"/>
<dbReference type="GeneID" id="62010927"/>
<dbReference type="KEGG" id="bur:Bcep18194_A4639"/>
<dbReference type="PATRIC" id="fig|482957.22.peg.1549"/>
<dbReference type="HOGENOM" id="CLU_070525_1_0_4"/>
<dbReference type="Proteomes" id="UP000002705">
    <property type="component" value="Chromosome 1"/>
</dbReference>
<dbReference type="GO" id="GO:0005829">
    <property type="term" value="C:cytosol"/>
    <property type="evidence" value="ECO:0007669"/>
    <property type="project" value="TreeGrafter"/>
</dbReference>
<dbReference type="GO" id="GO:0000028">
    <property type="term" value="P:ribosomal small subunit assembly"/>
    <property type="evidence" value="ECO:0007669"/>
    <property type="project" value="TreeGrafter"/>
</dbReference>
<dbReference type="GO" id="GO:0006412">
    <property type="term" value="P:translation"/>
    <property type="evidence" value="ECO:0007669"/>
    <property type="project" value="TreeGrafter"/>
</dbReference>
<dbReference type="CDD" id="cd01734">
    <property type="entry name" value="YlxS_C"/>
    <property type="match status" value="1"/>
</dbReference>
<dbReference type="Gene3D" id="2.30.30.180">
    <property type="entry name" value="Ribosome maturation factor RimP, C-terminal domain"/>
    <property type="match status" value="1"/>
</dbReference>
<dbReference type="Gene3D" id="3.30.300.70">
    <property type="entry name" value="RimP-like superfamily, N-terminal"/>
    <property type="match status" value="1"/>
</dbReference>
<dbReference type="HAMAP" id="MF_01077">
    <property type="entry name" value="RimP"/>
    <property type="match status" value="1"/>
</dbReference>
<dbReference type="InterPro" id="IPR003728">
    <property type="entry name" value="Ribosome_maturation_RimP"/>
</dbReference>
<dbReference type="InterPro" id="IPR028998">
    <property type="entry name" value="RimP_C"/>
</dbReference>
<dbReference type="InterPro" id="IPR036847">
    <property type="entry name" value="RimP_C_sf"/>
</dbReference>
<dbReference type="InterPro" id="IPR028989">
    <property type="entry name" value="RimP_N"/>
</dbReference>
<dbReference type="InterPro" id="IPR035956">
    <property type="entry name" value="RimP_N_sf"/>
</dbReference>
<dbReference type="NCBIfam" id="NF000929">
    <property type="entry name" value="PRK00092.2-1"/>
    <property type="match status" value="1"/>
</dbReference>
<dbReference type="PANTHER" id="PTHR33867">
    <property type="entry name" value="RIBOSOME MATURATION FACTOR RIMP"/>
    <property type="match status" value="1"/>
</dbReference>
<dbReference type="PANTHER" id="PTHR33867:SF1">
    <property type="entry name" value="RIBOSOME MATURATION FACTOR RIMP"/>
    <property type="match status" value="1"/>
</dbReference>
<dbReference type="Pfam" id="PF17384">
    <property type="entry name" value="DUF150_C"/>
    <property type="match status" value="1"/>
</dbReference>
<dbReference type="Pfam" id="PF02576">
    <property type="entry name" value="RimP_N"/>
    <property type="match status" value="1"/>
</dbReference>
<dbReference type="SUPFAM" id="SSF74942">
    <property type="entry name" value="YhbC-like, C-terminal domain"/>
    <property type="match status" value="1"/>
</dbReference>
<dbReference type="SUPFAM" id="SSF75420">
    <property type="entry name" value="YhbC-like, N-terminal domain"/>
    <property type="match status" value="1"/>
</dbReference>
<feature type="chain" id="PRO_0000229228" description="Ribosome maturation factor RimP">
    <location>
        <begin position="1"/>
        <end position="152"/>
    </location>
</feature>
<sequence length="152" mass="17054">MQLTELIETTVTGLGYELVDLERTGRGMLCIYIDQPAGISLEDCEKVTRQLQHVLTVENIDYERLEVSSPGLDRPLKKLADFERFAGSEVSVTLKKPLDGRKTYRGILHAPNGETIGLEFEGKKGEAAMLDFTLADIDKARLIPQVDFRSRK</sequence>